<comment type="function">
    <text>Potent inhibitor of cathepsins L and S, and papain.</text>
</comment>
<comment type="subcellular location">
    <subcellularLocation>
        <location>Cytoplasm</location>
    </subcellularLocation>
</comment>
<comment type="similarity">
    <text evidence="3">Belongs to the cystatin family.</text>
</comment>
<evidence type="ECO:0000250" key="1"/>
<evidence type="ECO:0000256" key="2">
    <source>
        <dbReference type="SAM" id="MobiDB-lite"/>
    </source>
</evidence>
<evidence type="ECO:0000305" key="3"/>
<name>CPI1_PIG</name>
<dbReference type="PIR" id="S40455">
    <property type="entry name" value="S40455"/>
</dbReference>
<dbReference type="SMR" id="P35479"/>
<dbReference type="FunCoup" id="P35479">
    <property type="interactions" value="108"/>
</dbReference>
<dbReference type="MEROPS" id="I25.001"/>
<dbReference type="PeptideAtlas" id="P35479"/>
<dbReference type="InParanoid" id="P35479"/>
<dbReference type="Proteomes" id="UP000008227">
    <property type="component" value="Unplaced"/>
</dbReference>
<dbReference type="Proteomes" id="UP000314985">
    <property type="component" value="Unplaced"/>
</dbReference>
<dbReference type="Proteomes" id="UP000694570">
    <property type="component" value="Unplaced"/>
</dbReference>
<dbReference type="Proteomes" id="UP000694571">
    <property type="component" value="Unplaced"/>
</dbReference>
<dbReference type="Proteomes" id="UP000694720">
    <property type="component" value="Unplaced"/>
</dbReference>
<dbReference type="Proteomes" id="UP000694722">
    <property type="component" value="Unplaced"/>
</dbReference>
<dbReference type="Proteomes" id="UP000694723">
    <property type="component" value="Unplaced"/>
</dbReference>
<dbReference type="Proteomes" id="UP000694724">
    <property type="component" value="Unplaced"/>
</dbReference>
<dbReference type="Proteomes" id="UP000694725">
    <property type="component" value="Unplaced"/>
</dbReference>
<dbReference type="Proteomes" id="UP000694726">
    <property type="component" value="Unplaced"/>
</dbReference>
<dbReference type="Proteomes" id="UP000694727">
    <property type="component" value="Unplaced"/>
</dbReference>
<dbReference type="Proteomes" id="UP000694728">
    <property type="component" value="Unplaced"/>
</dbReference>
<dbReference type="GO" id="GO:0005829">
    <property type="term" value="C:cytosol"/>
    <property type="evidence" value="ECO:0000318"/>
    <property type="project" value="GO_Central"/>
</dbReference>
<dbReference type="GO" id="GO:0004869">
    <property type="term" value="F:cysteine-type endopeptidase inhibitor activity"/>
    <property type="evidence" value="ECO:0000318"/>
    <property type="project" value="GO_Central"/>
</dbReference>
<dbReference type="CDD" id="cd00042">
    <property type="entry name" value="CY"/>
    <property type="match status" value="1"/>
</dbReference>
<dbReference type="FunFam" id="3.10.450.10:FF:000001">
    <property type="entry name" value="Cystatin-A"/>
    <property type="match status" value="1"/>
</dbReference>
<dbReference type="Gene3D" id="3.10.450.10">
    <property type="match status" value="1"/>
</dbReference>
<dbReference type="InterPro" id="IPR000010">
    <property type="entry name" value="Cystatin_dom"/>
</dbReference>
<dbReference type="InterPro" id="IPR046350">
    <property type="entry name" value="Cystatin_sf"/>
</dbReference>
<dbReference type="InterPro" id="IPR018073">
    <property type="entry name" value="Prot_inh_cystat_CS"/>
</dbReference>
<dbReference type="InterPro" id="IPR001713">
    <property type="entry name" value="Prot_inh_stefin"/>
</dbReference>
<dbReference type="PANTHER" id="PTHR11414">
    <property type="entry name" value="CYSTATIN FAMILY MEMBER"/>
    <property type="match status" value="1"/>
</dbReference>
<dbReference type="PANTHER" id="PTHR11414:SF20">
    <property type="entry name" value="CYSTATIN-A"/>
    <property type="match status" value="1"/>
</dbReference>
<dbReference type="Pfam" id="PF00031">
    <property type="entry name" value="Cystatin"/>
    <property type="match status" value="1"/>
</dbReference>
<dbReference type="PRINTS" id="PR00295">
    <property type="entry name" value="STEFINA"/>
</dbReference>
<dbReference type="SMART" id="SM00043">
    <property type="entry name" value="CY"/>
    <property type="match status" value="1"/>
</dbReference>
<dbReference type="SUPFAM" id="SSF54403">
    <property type="entry name" value="Cystatin/monellin"/>
    <property type="match status" value="1"/>
</dbReference>
<dbReference type="PROSITE" id="PS00287">
    <property type="entry name" value="CYSTATIN"/>
    <property type="match status" value="1"/>
</dbReference>
<accession>P35479</accession>
<protein>
    <recommendedName>
        <fullName>Leukocyte cysteine proteinase inhibitor 1</fullName>
    </recommendedName>
    <alternativeName>
        <fullName>PLCPI</fullName>
    </alternativeName>
    <alternativeName>
        <fullName>Stefin-D1</fullName>
    </alternativeName>
</protein>
<reference key="1">
    <citation type="journal article" date="1993" name="FEBS Lett.">
        <title>Pig leukocyte cysteine proteinase inhibitor (PLCPI), a new member of the stefin family.</title>
        <authorList>
            <person name="Lenarcic B."/>
            <person name="Ritonja A."/>
            <person name="Dolenc I."/>
            <person name="Stoka V."/>
            <person name="Berbic S."/>
            <person name="Pungercar J."/>
            <person name="Strukelj B."/>
            <person name="Turk V."/>
        </authorList>
    </citation>
    <scope>PROTEIN SEQUENCE</scope>
    <source>
        <tissue>Leukocyte</tissue>
    </source>
</reference>
<reference key="2">
    <citation type="journal article" date="1996" name="FEBS Lett.">
        <title>Differences in specificity for the interactions of stefins A, B and D with cysteine proteinases.</title>
        <authorList>
            <person name="Lenarcic B."/>
            <person name="Krizaj I."/>
            <person name="Zunec P."/>
            <person name="Turk V."/>
        </authorList>
    </citation>
    <scope>PROTEIN SEQUENCE</scope>
    <source>
        <tissue>Thymus</tissue>
    </source>
</reference>
<organism>
    <name type="scientific">Sus scrofa</name>
    <name type="common">Pig</name>
    <dbReference type="NCBI Taxonomy" id="9823"/>
    <lineage>
        <taxon>Eukaryota</taxon>
        <taxon>Metazoa</taxon>
        <taxon>Chordata</taxon>
        <taxon>Craniata</taxon>
        <taxon>Vertebrata</taxon>
        <taxon>Euteleostomi</taxon>
        <taxon>Mammalia</taxon>
        <taxon>Eutheria</taxon>
        <taxon>Laurasiatheria</taxon>
        <taxon>Artiodactyla</taxon>
        <taxon>Suina</taxon>
        <taxon>Suidae</taxon>
        <taxon>Sus</taxon>
    </lineage>
</organism>
<sequence length="103" mass="11767">MESEEMLAGGLTEPRPATPEIQEIANKVKPQLEEKTNKTYEKFEAIIYRSQVVAGTNYYIKVHVGGNNYVHIRVFQSLPHQEDPLKLIGYQVDKTKDDELTGF</sequence>
<proteinExistence type="evidence at protein level"/>
<feature type="chain" id="PRO_0000207133" description="Leukocyte cysteine proteinase inhibitor 1">
    <location>
        <begin position="1"/>
        <end position="103"/>
    </location>
</feature>
<feature type="region of interest" description="Disordered" evidence="2">
    <location>
        <begin position="1"/>
        <end position="20"/>
    </location>
</feature>
<feature type="short sequence motif" description="Secondary area of contact">
    <location>
        <begin position="51"/>
        <end position="55"/>
    </location>
</feature>
<feature type="site" description="Reactive site" evidence="1">
    <location>
        <position position="9"/>
    </location>
</feature>
<feature type="modified residue" description="Blocked amino end (Met); partial">
    <location>
        <position position="1"/>
    </location>
</feature>
<keyword id="KW-0963">Cytoplasm</keyword>
<keyword id="KW-0903">Direct protein sequencing</keyword>
<keyword id="KW-0646">Protease inhibitor</keyword>
<keyword id="KW-1185">Reference proteome</keyword>
<keyword id="KW-0789">Thiol protease inhibitor</keyword>